<protein>
    <recommendedName>
        <fullName evidence="1">Phosphoribosylformylglycinamidine cyclo-ligase</fullName>
        <ecNumber evidence="1">6.3.3.1</ecNumber>
    </recommendedName>
    <alternativeName>
        <fullName evidence="1">AIR synthase</fullName>
    </alternativeName>
    <alternativeName>
        <fullName evidence="1">AIRS</fullName>
    </alternativeName>
    <alternativeName>
        <fullName evidence="1">Phosphoribosyl-aminoimidazole synthetase</fullName>
    </alternativeName>
</protein>
<evidence type="ECO:0000255" key="1">
    <source>
        <dbReference type="HAMAP-Rule" id="MF_00741"/>
    </source>
</evidence>
<name>PUR5_PSEE4</name>
<comment type="catalytic activity">
    <reaction evidence="1">
        <text>2-formamido-N(1)-(5-O-phospho-beta-D-ribosyl)acetamidine + ATP = 5-amino-1-(5-phospho-beta-D-ribosyl)imidazole + ADP + phosphate + H(+)</text>
        <dbReference type="Rhea" id="RHEA:23032"/>
        <dbReference type="ChEBI" id="CHEBI:15378"/>
        <dbReference type="ChEBI" id="CHEBI:30616"/>
        <dbReference type="ChEBI" id="CHEBI:43474"/>
        <dbReference type="ChEBI" id="CHEBI:137981"/>
        <dbReference type="ChEBI" id="CHEBI:147287"/>
        <dbReference type="ChEBI" id="CHEBI:456216"/>
        <dbReference type="EC" id="6.3.3.1"/>
    </reaction>
</comment>
<comment type="pathway">
    <text evidence="1">Purine metabolism; IMP biosynthesis via de novo pathway; 5-amino-1-(5-phospho-D-ribosyl)imidazole from N(2)-formyl-N(1)-(5-phospho-D-ribosyl)glycinamide: step 2/2.</text>
</comment>
<comment type="subcellular location">
    <subcellularLocation>
        <location evidence="1">Cytoplasm</location>
    </subcellularLocation>
</comment>
<comment type="similarity">
    <text evidence="1">Belongs to the AIR synthase family.</text>
</comment>
<feature type="chain" id="PRO_1000046459" description="Phosphoribosylformylglycinamidine cyclo-ligase">
    <location>
        <begin position="1"/>
        <end position="352"/>
    </location>
</feature>
<organism>
    <name type="scientific">Pseudomonas entomophila (strain L48)</name>
    <dbReference type="NCBI Taxonomy" id="384676"/>
    <lineage>
        <taxon>Bacteria</taxon>
        <taxon>Pseudomonadati</taxon>
        <taxon>Pseudomonadota</taxon>
        <taxon>Gammaproteobacteria</taxon>
        <taxon>Pseudomonadales</taxon>
        <taxon>Pseudomonadaceae</taxon>
        <taxon>Pseudomonas</taxon>
    </lineage>
</organism>
<accession>Q1IDL2</accession>
<gene>
    <name evidence="1" type="primary">purM</name>
    <name type="ordered locus">PSEEN1370</name>
</gene>
<dbReference type="EC" id="6.3.3.1" evidence="1"/>
<dbReference type="EMBL" id="CT573326">
    <property type="protein sequence ID" value="CAK14247.1"/>
    <property type="molecule type" value="Genomic_DNA"/>
</dbReference>
<dbReference type="RefSeq" id="WP_011532663.1">
    <property type="nucleotide sequence ID" value="NC_008027.1"/>
</dbReference>
<dbReference type="SMR" id="Q1IDL2"/>
<dbReference type="STRING" id="384676.PSEEN1370"/>
<dbReference type="GeneID" id="32804634"/>
<dbReference type="KEGG" id="pen:PSEEN1370"/>
<dbReference type="eggNOG" id="COG0150">
    <property type="taxonomic scope" value="Bacteria"/>
</dbReference>
<dbReference type="HOGENOM" id="CLU_047116_0_0_6"/>
<dbReference type="OrthoDB" id="9777881at2"/>
<dbReference type="UniPathway" id="UPA00074">
    <property type="reaction ID" value="UER00129"/>
</dbReference>
<dbReference type="Proteomes" id="UP000000658">
    <property type="component" value="Chromosome"/>
</dbReference>
<dbReference type="GO" id="GO:0005829">
    <property type="term" value="C:cytosol"/>
    <property type="evidence" value="ECO:0007669"/>
    <property type="project" value="TreeGrafter"/>
</dbReference>
<dbReference type="GO" id="GO:0005524">
    <property type="term" value="F:ATP binding"/>
    <property type="evidence" value="ECO:0007669"/>
    <property type="project" value="UniProtKB-KW"/>
</dbReference>
<dbReference type="GO" id="GO:0004637">
    <property type="term" value="F:phosphoribosylamine-glycine ligase activity"/>
    <property type="evidence" value="ECO:0007669"/>
    <property type="project" value="TreeGrafter"/>
</dbReference>
<dbReference type="GO" id="GO:0004641">
    <property type="term" value="F:phosphoribosylformylglycinamidine cyclo-ligase activity"/>
    <property type="evidence" value="ECO:0007669"/>
    <property type="project" value="UniProtKB-UniRule"/>
</dbReference>
<dbReference type="GO" id="GO:0006189">
    <property type="term" value="P:'de novo' IMP biosynthetic process"/>
    <property type="evidence" value="ECO:0007669"/>
    <property type="project" value="UniProtKB-UniRule"/>
</dbReference>
<dbReference type="GO" id="GO:0046084">
    <property type="term" value="P:adenine biosynthetic process"/>
    <property type="evidence" value="ECO:0007669"/>
    <property type="project" value="TreeGrafter"/>
</dbReference>
<dbReference type="CDD" id="cd02196">
    <property type="entry name" value="PurM"/>
    <property type="match status" value="1"/>
</dbReference>
<dbReference type="FunFam" id="3.30.1330.10:FF:000001">
    <property type="entry name" value="Phosphoribosylformylglycinamidine cyclo-ligase"/>
    <property type="match status" value="1"/>
</dbReference>
<dbReference type="FunFam" id="3.90.650.10:FF:000001">
    <property type="entry name" value="Phosphoribosylformylglycinamidine cyclo-ligase"/>
    <property type="match status" value="1"/>
</dbReference>
<dbReference type="Gene3D" id="3.90.650.10">
    <property type="entry name" value="PurM-like C-terminal domain"/>
    <property type="match status" value="1"/>
</dbReference>
<dbReference type="Gene3D" id="3.30.1330.10">
    <property type="entry name" value="PurM-like, N-terminal domain"/>
    <property type="match status" value="1"/>
</dbReference>
<dbReference type="HAMAP" id="MF_00741">
    <property type="entry name" value="AIRS"/>
    <property type="match status" value="1"/>
</dbReference>
<dbReference type="InterPro" id="IPR010918">
    <property type="entry name" value="PurM-like_C_dom"/>
</dbReference>
<dbReference type="InterPro" id="IPR036676">
    <property type="entry name" value="PurM-like_C_sf"/>
</dbReference>
<dbReference type="InterPro" id="IPR016188">
    <property type="entry name" value="PurM-like_N"/>
</dbReference>
<dbReference type="InterPro" id="IPR036921">
    <property type="entry name" value="PurM-like_N_sf"/>
</dbReference>
<dbReference type="InterPro" id="IPR004733">
    <property type="entry name" value="PurM_cligase"/>
</dbReference>
<dbReference type="NCBIfam" id="TIGR00878">
    <property type="entry name" value="purM"/>
    <property type="match status" value="1"/>
</dbReference>
<dbReference type="PANTHER" id="PTHR10520:SF12">
    <property type="entry name" value="TRIFUNCTIONAL PURINE BIOSYNTHETIC PROTEIN ADENOSINE-3"/>
    <property type="match status" value="1"/>
</dbReference>
<dbReference type="PANTHER" id="PTHR10520">
    <property type="entry name" value="TRIFUNCTIONAL PURINE BIOSYNTHETIC PROTEIN ADENOSINE-3-RELATED"/>
    <property type="match status" value="1"/>
</dbReference>
<dbReference type="Pfam" id="PF00586">
    <property type="entry name" value="AIRS"/>
    <property type="match status" value="1"/>
</dbReference>
<dbReference type="Pfam" id="PF02769">
    <property type="entry name" value="AIRS_C"/>
    <property type="match status" value="1"/>
</dbReference>
<dbReference type="SUPFAM" id="SSF56042">
    <property type="entry name" value="PurM C-terminal domain-like"/>
    <property type="match status" value="1"/>
</dbReference>
<dbReference type="SUPFAM" id="SSF55326">
    <property type="entry name" value="PurM N-terminal domain-like"/>
    <property type="match status" value="1"/>
</dbReference>
<reference key="1">
    <citation type="journal article" date="2006" name="Nat. Biotechnol.">
        <title>Complete genome sequence of the entomopathogenic and metabolically versatile soil bacterium Pseudomonas entomophila.</title>
        <authorList>
            <person name="Vodovar N."/>
            <person name="Vallenet D."/>
            <person name="Cruveiller S."/>
            <person name="Rouy Z."/>
            <person name="Barbe V."/>
            <person name="Acosta C."/>
            <person name="Cattolico L."/>
            <person name="Jubin C."/>
            <person name="Lajus A."/>
            <person name="Segurens B."/>
            <person name="Vacherie B."/>
            <person name="Wincker P."/>
            <person name="Weissenbach J."/>
            <person name="Lemaitre B."/>
            <person name="Medigue C."/>
            <person name="Boccard F."/>
        </authorList>
    </citation>
    <scope>NUCLEOTIDE SEQUENCE [LARGE SCALE GENOMIC DNA]</scope>
    <source>
        <strain>L48</strain>
    </source>
</reference>
<proteinExistence type="inferred from homology"/>
<sequence length="352" mass="37054">MSKQPSLSYKDAGVDIDAGEALVERIKGVAKRTARPEVMGGLGGFGALCEIPAGYKQPVLVSGTDGVGTKLRLALNLNKHDSIGQDLVAMCVNDLVVCGAEPLFFLDYYATGKLNVDVAATVVTGIGAGCELAGCSLVGGETAEMPGMYEGEDYDLAGFCVGVVEKADIIDGSKVVTGDALIALPSSGPHSNGYSLIRKILEVSGTDIDNTQLDGKPLADLLMAPTRIYVKPLLQLIKQTGAVKAMAHITGGGLLDNIPRVLPKNAQAVVDVASWQRPVVFDFLQEKGNVDEHEMHRVLNCGVGMVICVAQDQVENALNVLRAEGEQPWVIGRIDVAAEGAAQVELHNLKAH</sequence>
<keyword id="KW-0067">ATP-binding</keyword>
<keyword id="KW-0963">Cytoplasm</keyword>
<keyword id="KW-0436">Ligase</keyword>
<keyword id="KW-0547">Nucleotide-binding</keyword>
<keyword id="KW-0658">Purine biosynthesis</keyword>